<proteinExistence type="evidence at transcript level"/>
<protein>
    <recommendedName>
        <fullName evidence="7">Serine/threonine-protein phosphatase PP1-delta</fullName>
        <ecNumber evidence="2">3.1.3.16</ecNumber>
    </recommendedName>
    <alternativeName>
        <fullName evidence="7">CeGLC-7-delta</fullName>
    </alternativeName>
    <alternativeName>
        <fullName evidence="9">Glc seven-like phosphatase 4</fullName>
    </alternativeName>
</protein>
<reference evidence="8" key="1">
    <citation type="journal article" date="1998" name="Science">
        <title>Genome sequence of the nematode C. elegans: a platform for investigating biology.</title>
        <authorList>
            <consortium name="The C. elegans sequencing consortium"/>
        </authorList>
    </citation>
    <scope>NUCLEOTIDE SEQUENCE [LARGE SCALE GENOMIC DNA]</scope>
    <source>
        <strain evidence="8">Bristol N2</strain>
    </source>
</reference>
<reference evidence="7" key="2">
    <citation type="journal article" date="2006" name="Nature">
        <title>Sperm chromatin proteomics identifies evolutionarily conserved fertility factors.</title>
        <authorList>
            <person name="Chu D.S."/>
            <person name="Liu H."/>
            <person name="Nix P."/>
            <person name="Wu T.F."/>
            <person name="Ralston E.J."/>
            <person name="Yates J.R. III"/>
            <person name="Meyer B.J."/>
        </authorList>
    </citation>
    <scope>FUNCTION</scope>
    <scope>SUBCELLULAR LOCATION</scope>
    <scope>TISSUE SPECIFICITY</scope>
    <scope>DEVELOPMENTAL STAGE</scope>
    <scope>DISRUPTION PHENOTYPE</scope>
</reference>
<reference evidence="7" key="3">
    <citation type="journal article" date="2012" name="Genetics">
        <title>Sperm development and motility are regulated by PP1 phosphatases in Caenorhabditis elegans.</title>
        <authorList>
            <person name="Wu J.C."/>
            <person name="Go A.C."/>
            <person name="Samson M."/>
            <person name="Cintra T."/>
            <person name="Mirsoian S."/>
            <person name="Wu T.F."/>
            <person name="Jow M.M."/>
            <person name="Routman E.J."/>
            <person name="Chu D.S."/>
        </authorList>
    </citation>
    <scope>FUNCTION</scope>
    <scope>SUBCELLULAR LOCATION</scope>
    <scope>TISSUE SPECIFICITY</scope>
    <scope>DEVELOPMENTAL STAGE</scope>
    <scope>DISRUPTION PHENOTYPE</scope>
</reference>
<comment type="function">
    <text evidence="3 4">Probable phosphatase which plays a redundant role with gsp-4 in spermatogenesis by regulating sister chromatid segregation during meiosis (PubMed:16943775, PubMed:22042574). In addition, involved in sperm motility by controlling the dynamic disassembly of major sperm proteins (MSP) in the spermatozoan pseudopodium (PubMed:22042574).</text>
</comment>
<comment type="catalytic activity">
    <reaction evidence="2">
        <text>O-phospho-L-seryl-[protein] + H2O = L-seryl-[protein] + phosphate</text>
        <dbReference type="Rhea" id="RHEA:20629"/>
        <dbReference type="Rhea" id="RHEA-COMP:9863"/>
        <dbReference type="Rhea" id="RHEA-COMP:11604"/>
        <dbReference type="ChEBI" id="CHEBI:15377"/>
        <dbReference type="ChEBI" id="CHEBI:29999"/>
        <dbReference type="ChEBI" id="CHEBI:43474"/>
        <dbReference type="ChEBI" id="CHEBI:83421"/>
        <dbReference type="EC" id="3.1.3.16"/>
    </reaction>
</comment>
<comment type="catalytic activity">
    <reaction evidence="2">
        <text>O-phospho-L-threonyl-[protein] + H2O = L-threonyl-[protein] + phosphate</text>
        <dbReference type="Rhea" id="RHEA:47004"/>
        <dbReference type="Rhea" id="RHEA-COMP:11060"/>
        <dbReference type="Rhea" id="RHEA-COMP:11605"/>
        <dbReference type="ChEBI" id="CHEBI:15377"/>
        <dbReference type="ChEBI" id="CHEBI:30013"/>
        <dbReference type="ChEBI" id="CHEBI:43474"/>
        <dbReference type="ChEBI" id="CHEBI:61977"/>
        <dbReference type="EC" id="3.1.3.16"/>
    </reaction>
</comment>
<comment type="subcellular location">
    <subcellularLocation>
        <location evidence="3">Chromosome</location>
    </subcellularLocation>
    <subcellularLocation>
        <location evidence="4">Cell projection</location>
        <location evidence="4">Pseudopodium</location>
    </subcellularLocation>
    <subcellularLocation>
        <location evidence="4">Cytoplasm</location>
    </subcellularLocation>
    <text evidence="4">Co-localizes with MSP in oblong stripes in the cytoplasm of inactive sperm and in the pseudopodium in activated sperm.</text>
</comment>
<comment type="tissue specificity">
    <text evidence="3 4">Expressed in male germline including spermatocytes, spermatids and spermatozoa.</text>
</comment>
<comment type="developmental stage">
    <text evidence="3 4">Expressed at all stages of spermatocyte meiosis.</text>
</comment>
<comment type="disruption phenotype">
    <text evidence="3 4">No obvious phenotype (PubMed:22042574). Simultaneous RNAi-mediated knockdown of gsp-3 and gsp-4 results in male sterility due to chromosome segregation defects during sperm meiosis (PubMed:16943775). gsp-3 and gsp-4 double mutant hermaphrodites have egg laying defects and no viable progeny. gsp-3, gsp-4 and him-8 triple mutants have incomplete separation of sister chromatids during the second meiotic segregation. Mislocalization of MSP in activated sperm. In addition, have partial reduction in mpk-1 phosphorylation and air-2 association with bivalent chromosomes in the most proximal oocyte in response to MSP (PubMed:22042574).</text>
</comment>
<comment type="similarity">
    <text evidence="2">Belongs to the PPP phosphatase family.</text>
</comment>
<comment type="caution">
    <text evidence="5 6">Due to the high similarity between gsp-3 and gsp-4, the antibody used to study expression does not distinguish between the two proteins.</text>
</comment>
<name>GLC7D_CAEEL</name>
<accession>P91420</accession>
<organism evidence="8">
    <name type="scientific">Caenorhabditis elegans</name>
    <dbReference type="NCBI Taxonomy" id="6239"/>
    <lineage>
        <taxon>Eukaryota</taxon>
        <taxon>Metazoa</taxon>
        <taxon>Ecdysozoa</taxon>
        <taxon>Nematoda</taxon>
        <taxon>Chromadorea</taxon>
        <taxon>Rhabditida</taxon>
        <taxon>Rhabditina</taxon>
        <taxon>Rhabditomorpha</taxon>
        <taxon>Rhabditoidea</taxon>
        <taxon>Rhabditidae</taxon>
        <taxon>Peloderinae</taxon>
        <taxon>Caenorhabditis</taxon>
    </lineage>
</organism>
<sequence length="305" mass="34584">MTATIDVDNLMSRLLNVGMSGGRLTTSVNEQELQTCCAVAKSVFASQASLLEVEPPIIVCGDIHGQYSDLLRIFDKNGFPPDINFLFLGDYVDRGRQNIETICLMFCFKIKYPENFFMLRGNHECPAINRVYGFYEECNRRYKSTRLWSIFQDTFNWMPLCGLIGSRILCMHGGLSPHLQTLDQLRQLPRPQDPPNPSIGIDLLWADPDQWVKGWQANTRGVSYVFGQDVVADVCSRLDIDLVARAHQVVQDGYEFFASKKMVTIFSAPHYCGQFDNSAATMKVDENMVCTFVMYKPTPKSLRKG</sequence>
<keyword id="KW-0966">Cell projection</keyword>
<keyword id="KW-0158">Chromosome</keyword>
<keyword id="KW-0963">Cytoplasm</keyword>
<keyword id="KW-0221">Differentiation</keyword>
<keyword id="KW-0378">Hydrolase</keyword>
<keyword id="KW-0464">Manganese</keyword>
<keyword id="KW-0479">Metal-binding</keyword>
<keyword id="KW-0904">Protein phosphatase</keyword>
<keyword id="KW-1185">Reference proteome</keyword>
<keyword id="KW-0744">Spermatogenesis</keyword>
<evidence type="ECO:0000250" key="1">
    <source>
        <dbReference type="UniProtKB" id="P36873"/>
    </source>
</evidence>
<evidence type="ECO:0000255" key="2">
    <source>
        <dbReference type="RuleBase" id="RU004273"/>
    </source>
</evidence>
<evidence type="ECO:0000269" key="3">
    <source>
    </source>
</evidence>
<evidence type="ECO:0000269" key="4">
    <source>
    </source>
</evidence>
<evidence type="ECO:0000303" key="5">
    <source>
    </source>
</evidence>
<evidence type="ECO:0000303" key="6">
    <source>
    </source>
</evidence>
<evidence type="ECO:0000305" key="7"/>
<evidence type="ECO:0000312" key="8">
    <source>
        <dbReference type="Proteomes" id="UP000001940"/>
    </source>
</evidence>
<evidence type="ECO:0000312" key="9">
    <source>
        <dbReference type="WormBase" id="T03F1.5"/>
    </source>
</evidence>
<feature type="chain" id="PRO_0000436389" description="Serine/threonine-protein phosphatase PP1-delta" evidence="7">
    <location>
        <begin position="1"/>
        <end position="305"/>
    </location>
</feature>
<feature type="active site" description="Proton donor" evidence="1">
    <location>
        <position position="123"/>
    </location>
</feature>
<feature type="binding site" evidence="1">
    <location>
        <position position="62"/>
    </location>
    <ligand>
        <name>Mn(2+)</name>
        <dbReference type="ChEBI" id="CHEBI:29035"/>
        <label>1</label>
    </ligand>
</feature>
<feature type="binding site" evidence="1">
    <location>
        <position position="64"/>
    </location>
    <ligand>
        <name>Mn(2+)</name>
        <dbReference type="ChEBI" id="CHEBI:29035"/>
        <label>1</label>
    </ligand>
</feature>
<feature type="binding site" evidence="1">
    <location>
        <position position="90"/>
    </location>
    <ligand>
        <name>Mn(2+)</name>
        <dbReference type="ChEBI" id="CHEBI:29035"/>
        <label>1</label>
    </ligand>
</feature>
<feature type="binding site" evidence="1">
    <location>
        <position position="90"/>
    </location>
    <ligand>
        <name>Mn(2+)</name>
        <dbReference type="ChEBI" id="CHEBI:29035"/>
        <label>2</label>
    </ligand>
</feature>
<feature type="binding site" evidence="1">
    <location>
        <position position="122"/>
    </location>
    <ligand>
        <name>Mn(2+)</name>
        <dbReference type="ChEBI" id="CHEBI:29035"/>
        <label>2</label>
    </ligand>
</feature>
<feature type="binding site" evidence="1">
    <location>
        <position position="172"/>
    </location>
    <ligand>
        <name>Mn(2+)</name>
        <dbReference type="ChEBI" id="CHEBI:29035"/>
        <label>2</label>
    </ligand>
</feature>
<feature type="binding site" evidence="1">
    <location>
        <position position="247"/>
    </location>
    <ligand>
        <name>Mn(2+)</name>
        <dbReference type="ChEBI" id="CHEBI:29035"/>
        <label>2</label>
    </ligand>
</feature>
<dbReference type="EC" id="3.1.3.16" evidence="2"/>
<dbReference type="EMBL" id="BX284601">
    <property type="protein sequence ID" value="CCD67789.1"/>
    <property type="molecule type" value="Genomic_DNA"/>
</dbReference>
<dbReference type="PIR" id="T29191">
    <property type="entry name" value="T29191"/>
</dbReference>
<dbReference type="RefSeq" id="NP_001379823.1">
    <property type="nucleotide sequence ID" value="NM_001393293.1"/>
</dbReference>
<dbReference type="RefSeq" id="NP_491237.1">
    <property type="nucleotide sequence ID" value="NM_058836.5"/>
</dbReference>
<dbReference type="SMR" id="P91420"/>
<dbReference type="FunCoup" id="P91420">
    <property type="interactions" value="16"/>
</dbReference>
<dbReference type="STRING" id="6239.T03F1.5.2"/>
<dbReference type="PaxDb" id="6239-T03F1.5.1"/>
<dbReference type="PeptideAtlas" id="P91420"/>
<dbReference type="EnsemblMetazoa" id="T03F1.5.1">
    <property type="protein sequence ID" value="T03F1.5.1"/>
    <property type="gene ID" value="WBGene00020187"/>
</dbReference>
<dbReference type="EnsemblMetazoa" id="T03F1.5.2">
    <property type="protein sequence ID" value="T03F1.5.2"/>
    <property type="gene ID" value="WBGene00020187"/>
</dbReference>
<dbReference type="EnsemblMetazoa" id="T03F1.5.3">
    <property type="protein sequence ID" value="T03F1.5.3"/>
    <property type="gene ID" value="WBGene00020187"/>
</dbReference>
<dbReference type="GeneID" id="171960"/>
<dbReference type="UCSC" id="T03F1.5">
    <property type="organism name" value="c. elegans"/>
</dbReference>
<dbReference type="AGR" id="WB:WBGene00020187"/>
<dbReference type="WormBase" id="T03F1.5">
    <property type="protein sequence ID" value="CE13104"/>
    <property type="gene ID" value="WBGene00020187"/>
    <property type="gene designation" value="gsp-4"/>
</dbReference>
<dbReference type="eggNOG" id="KOG0374">
    <property type="taxonomic scope" value="Eukaryota"/>
</dbReference>
<dbReference type="GeneTree" id="ENSGT00940000169571"/>
<dbReference type="HOGENOM" id="CLU_004962_0_0_1"/>
<dbReference type="InParanoid" id="P91420"/>
<dbReference type="OMA" id="DVCQKLD"/>
<dbReference type="OrthoDB" id="1930084at2759"/>
<dbReference type="PhylomeDB" id="P91420"/>
<dbReference type="PRO" id="PR:P91420"/>
<dbReference type="Proteomes" id="UP000001940">
    <property type="component" value="Chromosome I"/>
</dbReference>
<dbReference type="Bgee" id="WBGene00020187">
    <property type="expression patterns" value="Expressed in adult organism and 2 other cell types or tissues"/>
</dbReference>
<dbReference type="GO" id="GO:0000785">
    <property type="term" value="C:chromatin"/>
    <property type="evidence" value="ECO:0000314"/>
    <property type="project" value="WormBase"/>
</dbReference>
<dbReference type="GO" id="GO:0005737">
    <property type="term" value="C:cytoplasm"/>
    <property type="evidence" value="ECO:0000314"/>
    <property type="project" value="WormBase"/>
</dbReference>
<dbReference type="GO" id="GO:0005634">
    <property type="term" value="C:nucleus"/>
    <property type="evidence" value="ECO:0000318"/>
    <property type="project" value="GO_Central"/>
</dbReference>
<dbReference type="GO" id="GO:0031143">
    <property type="term" value="C:pseudopodium"/>
    <property type="evidence" value="ECO:0000314"/>
    <property type="project" value="WormBase"/>
</dbReference>
<dbReference type="GO" id="GO:0046872">
    <property type="term" value="F:metal ion binding"/>
    <property type="evidence" value="ECO:0007669"/>
    <property type="project" value="UniProtKB-KW"/>
</dbReference>
<dbReference type="GO" id="GO:0004722">
    <property type="term" value="F:protein serine/threonine phosphatase activity"/>
    <property type="evidence" value="ECO:0000318"/>
    <property type="project" value="GO_Central"/>
</dbReference>
<dbReference type="GO" id="GO:0097723">
    <property type="term" value="P:amoeboid sperm motility"/>
    <property type="evidence" value="ECO:0000316"/>
    <property type="project" value="WormBase"/>
</dbReference>
<dbReference type="GO" id="GO:0030154">
    <property type="term" value="P:cell differentiation"/>
    <property type="evidence" value="ECO:0007669"/>
    <property type="project" value="UniProtKB-KW"/>
</dbReference>
<dbReference type="GO" id="GO:0018991">
    <property type="term" value="P:egg-laying behavior"/>
    <property type="evidence" value="ECO:0000316"/>
    <property type="project" value="WormBase"/>
</dbReference>
<dbReference type="GO" id="GO:0007060">
    <property type="term" value="P:male meiosis chromosome segregation"/>
    <property type="evidence" value="ECO:0000316"/>
    <property type="project" value="WormBase"/>
</dbReference>
<dbReference type="GO" id="GO:0031272">
    <property type="term" value="P:regulation of pseudopodium assembly"/>
    <property type="evidence" value="ECO:0000316"/>
    <property type="project" value="WormBase"/>
</dbReference>
<dbReference type="GO" id="GO:0022414">
    <property type="term" value="P:reproductive process"/>
    <property type="evidence" value="ECO:0000315"/>
    <property type="project" value="WormBase"/>
</dbReference>
<dbReference type="GO" id="GO:0007283">
    <property type="term" value="P:spermatogenesis"/>
    <property type="evidence" value="ECO:0007669"/>
    <property type="project" value="UniProtKB-KW"/>
</dbReference>
<dbReference type="FunFam" id="3.60.21.10:FF:000026">
    <property type="entry name" value="Serine/threonine-protein phosphatase"/>
    <property type="match status" value="1"/>
</dbReference>
<dbReference type="Gene3D" id="3.60.21.10">
    <property type="match status" value="1"/>
</dbReference>
<dbReference type="InterPro" id="IPR004843">
    <property type="entry name" value="Calcineurin-like_PHP_ApaH"/>
</dbReference>
<dbReference type="InterPro" id="IPR029052">
    <property type="entry name" value="Metallo-depent_PP-like"/>
</dbReference>
<dbReference type="InterPro" id="IPR050341">
    <property type="entry name" value="PP1_catalytic_subunit"/>
</dbReference>
<dbReference type="InterPro" id="IPR006186">
    <property type="entry name" value="Ser/Thr-sp_prot-phosphatase"/>
</dbReference>
<dbReference type="InterPro" id="IPR031675">
    <property type="entry name" value="STPPase_N"/>
</dbReference>
<dbReference type="PANTHER" id="PTHR11668">
    <property type="entry name" value="SERINE/THREONINE PROTEIN PHOSPHATASE"/>
    <property type="match status" value="1"/>
</dbReference>
<dbReference type="PANTHER" id="PTHR11668:SF492">
    <property type="entry name" value="SERINE_THREONINE-PROTEIN PHOSPHATASE PP1-DELTA-RELATED"/>
    <property type="match status" value="1"/>
</dbReference>
<dbReference type="Pfam" id="PF00149">
    <property type="entry name" value="Metallophos"/>
    <property type="match status" value="1"/>
</dbReference>
<dbReference type="Pfam" id="PF16891">
    <property type="entry name" value="STPPase_N"/>
    <property type="match status" value="1"/>
</dbReference>
<dbReference type="PRINTS" id="PR00114">
    <property type="entry name" value="STPHPHTASE"/>
</dbReference>
<dbReference type="SMART" id="SM00156">
    <property type="entry name" value="PP2Ac"/>
    <property type="match status" value="1"/>
</dbReference>
<dbReference type="SUPFAM" id="SSF56300">
    <property type="entry name" value="Metallo-dependent phosphatases"/>
    <property type="match status" value="1"/>
</dbReference>
<dbReference type="PROSITE" id="PS00125">
    <property type="entry name" value="SER_THR_PHOSPHATASE"/>
    <property type="match status" value="1"/>
</dbReference>
<gene>
    <name evidence="9" type="primary">gsp-4</name>
    <name evidence="9" type="ORF">T03F1.5</name>
</gene>